<protein>
    <recommendedName>
        <fullName evidence="4">U1-poneritoxin-Ni3d</fullName>
        <shortName evidence="4">U1-PONTX-Ni3d</shortName>
    </recommendedName>
    <alternativeName>
        <fullName evidence="5">Poneratoxin</fullName>
    </alternativeName>
    <alternativeName>
        <fullName evidence="3">Ponericin Pi I4</fullName>
    </alternativeName>
</protein>
<dbReference type="GO" id="GO:0005576">
    <property type="term" value="C:extracellular region"/>
    <property type="evidence" value="ECO:0007669"/>
    <property type="project" value="UniProtKB-SubCell"/>
</dbReference>
<dbReference type="GO" id="GO:0042742">
    <property type="term" value="P:defense response to bacterium"/>
    <property type="evidence" value="ECO:0007669"/>
    <property type="project" value="UniProtKB-KW"/>
</dbReference>
<dbReference type="InterPro" id="IPR010002">
    <property type="entry name" value="Poneritoxin"/>
</dbReference>
<dbReference type="Pfam" id="PF07442">
    <property type="entry name" value="Ponericin"/>
    <property type="match status" value="1"/>
</dbReference>
<name>GTX3D_NEOIV</name>
<reference key="1">
    <citation type="journal article" date="2014" name="Toxicon">
        <title>Diversity of peptide toxins from stinging ant venoms.</title>
        <authorList>
            <person name="Aili S.R."/>
            <person name="Touchard A."/>
            <person name="Escoubas P."/>
            <person name="Padula M.P."/>
            <person name="Orivel J."/>
            <person name="Dejean A."/>
            <person name="Nicholson G.M."/>
        </authorList>
    </citation>
    <scope>REVIEW</scope>
    <scope>PROTEIN SEQUENCE</scope>
</reference>
<reference key="2">
    <citation type="journal article" date="2016" name="Toxins">
        <title>The biochemical toxin arsenal from ant venoms.</title>
        <authorList>
            <person name="Touchard A."/>
            <person name="Aili S.R."/>
            <person name="Fox E.G."/>
            <person name="Escoubas P."/>
            <person name="Orivel J."/>
            <person name="Nicholson G.M."/>
            <person name="Dejean A."/>
        </authorList>
    </citation>
    <scope>REVIEW</scope>
    <scope>NOMENCLATURE</scope>
</reference>
<sequence length="30" mass="3196">GWKDWLKTAGGWLKKKGPSILKAVVGAATQ</sequence>
<accession>P0DSJ2</accession>
<comment type="function">
    <text evidence="1">Has activity against some Gram-positive bacteria and S.cerevisiae. Has a non-hemolytic activity.</text>
</comment>
<comment type="subcellular location">
    <subcellularLocation>
        <location evidence="6">Secreted</location>
    </subcellularLocation>
</comment>
<comment type="tissue specificity">
    <text evidence="6">Expressed by the venom gland.</text>
</comment>
<comment type="similarity">
    <text evidence="5">Belongs to the ponericin-G family.</text>
</comment>
<proteinExistence type="evidence at protein level"/>
<feature type="peptide" id="PRO_0000447062" description="U1-poneritoxin-Ni3d" evidence="2">
    <location>
        <begin position="1"/>
        <end position="30"/>
    </location>
</feature>
<organism>
    <name type="scientific">Neoponera inversa</name>
    <name type="common">Ant</name>
    <name type="synonym">Ponera inversa</name>
    <dbReference type="NCBI Taxonomy" id="264722"/>
    <lineage>
        <taxon>Eukaryota</taxon>
        <taxon>Metazoa</taxon>
        <taxon>Ecdysozoa</taxon>
        <taxon>Arthropoda</taxon>
        <taxon>Hexapoda</taxon>
        <taxon>Insecta</taxon>
        <taxon>Pterygota</taxon>
        <taxon>Neoptera</taxon>
        <taxon>Endopterygota</taxon>
        <taxon>Hymenoptera</taxon>
        <taxon>Apocrita</taxon>
        <taxon>Aculeata</taxon>
        <taxon>Formicoidea</taxon>
        <taxon>Formicidae</taxon>
        <taxon>Ponerinae</taxon>
        <taxon>Ponerini</taxon>
        <taxon>Neoponera</taxon>
    </lineage>
</organism>
<keyword id="KW-0044">Antibiotic</keyword>
<keyword id="KW-0929">Antimicrobial</keyword>
<keyword id="KW-0903">Direct protein sequencing</keyword>
<keyword id="KW-0964">Secreted</keyword>
<evidence type="ECO:0000250" key="1">
    <source>
        <dbReference type="UniProtKB" id="P82417"/>
    </source>
</evidence>
<evidence type="ECO:0000269" key="2">
    <source>
    </source>
</evidence>
<evidence type="ECO:0000303" key="3">
    <source>
    </source>
</evidence>
<evidence type="ECO:0000303" key="4">
    <source>
    </source>
</evidence>
<evidence type="ECO:0000305" key="5"/>
<evidence type="ECO:0000305" key="6">
    <source>
    </source>
</evidence>